<evidence type="ECO:0000255" key="1"/>
<evidence type="ECO:0000256" key="2">
    <source>
        <dbReference type="SAM" id="MobiDB-lite"/>
    </source>
</evidence>
<evidence type="ECO:0000269" key="3">
    <source>
    </source>
</evidence>
<evidence type="ECO:0000269" key="4">
    <source ref="2"/>
</evidence>
<evidence type="ECO:0000303" key="5">
    <source>
    </source>
</evidence>
<evidence type="ECO:0000305" key="6"/>
<evidence type="ECO:0000312" key="7">
    <source>
        <dbReference type="EMBL" id="ADZ48538.1"/>
    </source>
</evidence>
<evidence type="ECO:0000312" key="8">
    <source>
        <dbReference type="EMBL" id="BAL63006.1"/>
    </source>
</evidence>
<gene>
    <name evidence="7" type="primary">PIK-2</name>
    <name evidence="8" type="synonym">PIK2-KA</name>
</gene>
<sequence>MELVVGASEATMKSLLGKLGNLLAQEYALISGIRGDIQYINDELASMQAFLRDLSNVPEGHSHGHRMKDWMKQIRDIAYDVEDCIDDFAHRLPQDSISDAKWSFLLTKIYELWTWWPRRVIASNIAQLKVRAQQIADRRSRYGVNNPEHLDSSSSARTRAVNYEIAEYQVTSPQIIGIKEPVGMKTVMEELEVWLTNPQAENGQAVLSIVGFGGVGKTTIATALYRKVSEKFQCRASVAVSQNYDQGKVLNSILSQVSNQEQGSSTTISEKKNLTSGAKSMLKTALSLLRGNCICQPENDGNPDNTPIRLQETTDDDQNPRKLEQLLAEKSYILLIDDIWSAETWESIRSILPKNNKGGRIIVTTRFQAVGSTCSPLETDRLHTVDFLTDDESQNLFNTSICESKIRKDSNKVDEQVPEEIWKICGGLPLAIVSMAGLVACNPRKACCDWSKLCKSLFPEQETPLTLDGVTRILDCCYNDLPADLKTCLLYLSIFPKGWKISRKRLSRRWIAEGFANEKQGLTQERVAEAYFNQLTRRNLVRPMEHGSNGKVKTFQVHDMVLEYIMSKSIEENFITVVGGHWQMTAPSNKVRRLSMQSSGSNRGSSTKGLNLAQVRSLTVFGNLNHVPFHSFNYGIIQVLDLEDWKGLKERHMTEICQMLLLKYLSIRRTEISKIPSKIQKLEYLETLDIRETYVRDLPKSIVQLKRIISILGGNKNTRKGLRLPQEKSKKPIKNPSPQGKTKEPAKKGFLSQEKGKGAMKALRVLSGIEIVEESSEVAAGLHQLTGLRKLAIYKLNITKGGDTFKQLQSSIEYLGSCGLQTLAINDENSEFINSLGDMPAPPRYLVALELSGKLEKLPKWITSITTLNKLTISVTVLRTETLEILHILPSLFSLTFAFSLSAAKQDQDIIKDILENNKLDSDGEIVIPAEGFKSLKLLRFFAPLVPKLSFLDKNAMPALEIIEMRFKDFEGLFGIEILENLREVHLKVSDGAEAITKFLVNDLKVNTEKPKVFVDGIVTA</sequence>
<protein>
    <recommendedName>
        <fullName evidence="6">Disease resistance protein Pik-2</fullName>
    </recommendedName>
    <alternativeName>
        <fullName evidence="7">Pik-2 blast resistance protein</fullName>
    </alternativeName>
</protein>
<feature type="chain" id="PRO_0000444664" description="Disease resistance protein Pik-2">
    <location>
        <begin position="1"/>
        <end position="1021"/>
    </location>
</feature>
<feature type="domain" description="NB-ARC" evidence="1">
    <location>
        <begin position="186"/>
        <end position="519"/>
    </location>
</feature>
<feature type="repeat" description="LRR 1" evidence="1">
    <location>
        <begin position="612"/>
        <end position="634"/>
    </location>
</feature>
<feature type="repeat" description="LRR 2" evidence="1">
    <location>
        <begin position="659"/>
        <end position="682"/>
    </location>
</feature>
<feature type="repeat" description="LRR 3" evidence="1">
    <location>
        <begin position="683"/>
        <end position="705"/>
    </location>
</feature>
<feature type="repeat" description="LRR 4" evidence="1">
    <location>
        <begin position="785"/>
        <end position="807"/>
    </location>
</feature>
<feature type="repeat" description="LRR 5" evidence="1">
    <location>
        <begin position="817"/>
        <end position="841"/>
    </location>
</feature>
<feature type="repeat" description="LRR 6" evidence="1">
    <location>
        <begin position="843"/>
        <end position="865"/>
    </location>
</feature>
<feature type="repeat" description="LRR 7" evidence="1">
    <location>
        <begin position="866"/>
        <end position="888"/>
    </location>
</feature>
<feature type="repeat" description="LRR 8" evidence="1">
    <location>
        <begin position="912"/>
        <end position="935"/>
    </location>
</feature>
<feature type="repeat" description="LRR 9" evidence="1">
    <location>
        <begin position="957"/>
        <end position="981"/>
    </location>
</feature>
<feature type="region of interest" description="Structured coiled coil (CC) domain" evidence="5">
    <location>
        <begin position="1"/>
        <end position="182"/>
    </location>
</feature>
<feature type="region of interest" description="Disordered" evidence="2">
    <location>
        <begin position="297"/>
        <end position="317"/>
    </location>
</feature>
<feature type="region of interest" description="Disordered" evidence="2">
    <location>
        <begin position="719"/>
        <end position="751"/>
    </location>
</feature>
<keyword id="KW-0067">ATP-binding</keyword>
<keyword id="KW-0175">Coiled coil</keyword>
<keyword id="KW-0433">Leucine-rich repeat</keyword>
<keyword id="KW-0547">Nucleotide-binding</keyword>
<keyword id="KW-0611">Plant defense</keyword>
<keyword id="KW-0677">Repeat</keyword>
<comment type="function">
    <text evidence="3 4">Disease resistance (R) protein. Resistance proteins guard the plant against pathogens that contain an appropriate avirulence protein via an indirect interaction with this avirulence protein. That triggers a defense system including the hypersensitive response, which restricts the pathogen growth. Contribution of Pik-1 is required to recognize the effector avirulence protein AVR-Pik.</text>
</comment>
<comment type="similarity">
    <text evidence="6">Belongs to the disease resistance NB-LRR family.</text>
</comment>
<accession>P0DO07</accession>
<accession>B5UBC0</accession>
<name>PIK2_ORYSJ</name>
<organism>
    <name type="scientific">Oryza sativa subsp. japonica</name>
    <name type="common">Rice</name>
    <dbReference type="NCBI Taxonomy" id="39947"/>
    <lineage>
        <taxon>Eukaryota</taxon>
        <taxon>Viridiplantae</taxon>
        <taxon>Streptophyta</taxon>
        <taxon>Embryophyta</taxon>
        <taxon>Tracheophyta</taxon>
        <taxon>Spermatophyta</taxon>
        <taxon>Magnoliopsida</taxon>
        <taxon>Liliopsida</taxon>
        <taxon>Poales</taxon>
        <taxon>Poaceae</taxon>
        <taxon>BOP clade</taxon>
        <taxon>Oryzoideae</taxon>
        <taxon>Oryzeae</taxon>
        <taxon>Oryzinae</taxon>
        <taxon>Oryza</taxon>
        <taxon>Oryza sativa</taxon>
    </lineage>
</organism>
<reference key="1">
    <citation type="journal article" date="2011" name="New Phytol.">
        <title>The isolation and characterization of Pik, a rice blast resistance gene which emerged after rice domestication.</title>
        <authorList>
            <person name="Zhai C."/>
            <person name="Lin F."/>
            <person name="Dong Z."/>
            <person name="He X."/>
            <person name="Yuan B."/>
            <person name="Zeng X."/>
            <person name="Wang L."/>
            <person name="Pan Q."/>
        </authorList>
    </citation>
    <scope>NUCLEOTIDE SEQUENCE [GENOMIC DNA]</scope>
    <scope>FUNCTION</scope>
    <source>
        <strain>cv. Kusabue</strain>
    </source>
</reference>
<reference key="2">
    <citation type="journal article" date="2012" name="Mol. Breed.">
        <title>Characterization of the rice blast resistance gene Pik cloned from Kanto51.</title>
        <authorList>
            <person name="Ashikawa I."/>
            <person name="Hayashi N."/>
            <person name="Abe F."/>
            <person name="Wu J."/>
            <person name="Matsumoto T."/>
        </authorList>
    </citation>
    <scope>NUCLEOTIDE SEQUENCE [GENOMIC DNA]</scope>
    <scope>FUNCTION</scope>
    <source>
        <strain>cv. Kanto 51</strain>
    </source>
</reference>
<dbReference type="EMBL" id="HM048900">
    <property type="protein sequence ID" value="ADZ48538.1"/>
    <property type="molecule type" value="Genomic_DNA"/>
</dbReference>
<dbReference type="EMBL" id="AB616659">
    <property type="protein sequence ID" value="BAL63006.1"/>
    <property type="molecule type" value="Genomic_DNA"/>
</dbReference>
<dbReference type="SMR" id="P0DO07"/>
<dbReference type="GO" id="GO:0043531">
    <property type="term" value="F:ADP binding"/>
    <property type="evidence" value="ECO:0007669"/>
    <property type="project" value="InterPro"/>
</dbReference>
<dbReference type="GO" id="GO:0005524">
    <property type="term" value="F:ATP binding"/>
    <property type="evidence" value="ECO:0007669"/>
    <property type="project" value="UniProtKB-KW"/>
</dbReference>
<dbReference type="GO" id="GO:0042742">
    <property type="term" value="P:defense response to bacterium"/>
    <property type="evidence" value="ECO:0000315"/>
    <property type="project" value="UniProtKB"/>
</dbReference>
<dbReference type="GO" id="GO:0002758">
    <property type="term" value="P:innate immune response-activating signaling pathway"/>
    <property type="evidence" value="ECO:0000315"/>
    <property type="project" value="UniProtKB"/>
</dbReference>
<dbReference type="GO" id="GO:0009626">
    <property type="term" value="P:plant-type hypersensitive response"/>
    <property type="evidence" value="ECO:0000315"/>
    <property type="project" value="UniProtKB"/>
</dbReference>
<dbReference type="CDD" id="cd14798">
    <property type="entry name" value="RX-CC_like"/>
    <property type="match status" value="1"/>
</dbReference>
<dbReference type="FunFam" id="3.80.10.10:FF:000942">
    <property type="entry name" value="Disease resistance protein Pik-2"/>
    <property type="match status" value="1"/>
</dbReference>
<dbReference type="FunFam" id="3.80.10.10:FF:000943">
    <property type="entry name" value="Disease resistance protein Pik-2"/>
    <property type="match status" value="1"/>
</dbReference>
<dbReference type="FunFam" id="1.10.10.10:FF:000322">
    <property type="entry name" value="Probable disease resistance protein At1g63360"/>
    <property type="match status" value="1"/>
</dbReference>
<dbReference type="Gene3D" id="1.20.5.4130">
    <property type="match status" value="1"/>
</dbReference>
<dbReference type="Gene3D" id="1.10.8.430">
    <property type="entry name" value="Helical domain of apoptotic protease-activating factors"/>
    <property type="match status" value="1"/>
</dbReference>
<dbReference type="Gene3D" id="3.40.50.300">
    <property type="entry name" value="P-loop containing nucleotide triphosphate hydrolases"/>
    <property type="match status" value="1"/>
</dbReference>
<dbReference type="Gene3D" id="3.80.10.10">
    <property type="entry name" value="Ribonuclease Inhibitor"/>
    <property type="match status" value="2"/>
</dbReference>
<dbReference type="Gene3D" id="1.10.10.10">
    <property type="entry name" value="Winged helix-like DNA-binding domain superfamily/Winged helix DNA-binding domain"/>
    <property type="match status" value="1"/>
</dbReference>
<dbReference type="InterPro" id="IPR042197">
    <property type="entry name" value="Apaf_helical"/>
</dbReference>
<dbReference type="InterPro" id="IPR044974">
    <property type="entry name" value="Disease_R_plants"/>
</dbReference>
<dbReference type="InterPro" id="IPR032675">
    <property type="entry name" value="LRR_dom_sf"/>
</dbReference>
<dbReference type="InterPro" id="IPR055414">
    <property type="entry name" value="LRR_R13L4/SHOC2-like"/>
</dbReference>
<dbReference type="InterPro" id="IPR002182">
    <property type="entry name" value="NB-ARC"/>
</dbReference>
<dbReference type="InterPro" id="IPR027417">
    <property type="entry name" value="P-loop_NTPase"/>
</dbReference>
<dbReference type="InterPro" id="IPR038005">
    <property type="entry name" value="RX-like_CC"/>
</dbReference>
<dbReference type="InterPro" id="IPR041118">
    <property type="entry name" value="Rx_N"/>
</dbReference>
<dbReference type="InterPro" id="IPR036388">
    <property type="entry name" value="WH-like_DNA-bd_sf"/>
</dbReference>
<dbReference type="PANTHER" id="PTHR23155:SF1013">
    <property type="entry name" value="DISEASE RESISTANCE PROTEIN PIK6-NP"/>
    <property type="match status" value="1"/>
</dbReference>
<dbReference type="PANTHER" id="PTHR23155">
    <property type="entry name" value="DISEASE RESISTANCE PROTEIN RP"/>
    <property type="match status" value="1"/>
</dbReference>
<dbReference type="Pfam" id="PF23598">
    <property type="entry name" value="LRR_14"/>
    <property type="match status" value="2"/>
</dbReference>
<dbReference type="Pfam" id="PF00931">
    <property type="entry name" value="NB-ARC"/>
    <property type="match status" value="2"/>
</dbReference>
<dbReference type="Pfam" id="PF18052">
    <property type="entry name" value="Rx_N"/>
    <property type="match status" value="1"/>
</dbReference>
<dbReference type="Pfam" id="PF23559">
    <property type="entry name" value="WH_DRP"/>
    <property type="match status" value="1"/>
</dbReference>
<dbReference type="PRINTS" id="PR00364">
    <property type="entry name" value="DISEASERSIST"/>
</dbReference>
<dbReference type="SUPFAM" id="SSF52058">
    <property type="entry name" value="L domain-like"/>
    <property type="match status" value="1"/>
</dbReference>
<dbReference type="SUPFAM" id="SSF52540">
    <property type="entry name" value="P-loop containing nucleoside triphosphate hydrolases"/>
    <property type="match status" value="1"/>
</dbReference>
<proteinExistence type="inferred from homology"/>